<accession>P23291</accession>
<accession>D3DL84</accession>
<accession>E9P958</accession>
<protein>
    <recommendedName>
        <fullName>Casein kinase I homolog 1</fullName>
        <ecNumber>2.7.11.1</ecNumber>
    </recommendedName>
</protein>
<gene>
    <name type="primary">YCK1</name>
    <name type="synonym">CKI2</name>
    <name type="ordered locus">YHR135C</name>
</gene>
<proteinExistence type="evidence at protein level"/>
<sequence length="538" mass="61715">MSMPIASTTLAVNNLTNINGNANFNVQANKQLHHQAVDSPARSSMTATTAANSNSNSSRDDSTIVGLHYKIGKKIGEGSFGVLFEGTNMINGVPVAIKFEPRKTEAPQLRDEYKTYKILNGTPNIPYAYYFGQEGLHNILVIDLLGPSLEDLFDWCGRKFSVKTVVQVAVQMITLIEDLHAHDLIYRDIKPDNFLIGRPGQPDANNIHLIDFGMAKQYRDPKTKQHIPYREKKSLSGTARYMSINTHLGREQSRRDDMEALGHVFFYFLRGHLPWQGLKAPNNKQKYEKIGEKKRSTNVYDLAQGLPVQFGRYLEIVRSLSFEECPDYEGYRKLLLSVLDDLGETADGQYDWMKLNDGRGWDLNINKKPNLHGYGHPNPPNEKSRKHRNKQLQMQQLQMQQLQQQQQQQQYAQKTEADMRNSQYKPKLDPTSYEAYQHQTQQKYLQEQQKRQQQQKLQEQQLQEQQLQQQQQQQQQLRATGQPPSQPQAQTQSQQFGARYQPQQQPSAALRTPEQHPNDDNSSLAASHKGFFQKLGCC</sequence>
<reference key="1">
    <citation type="journal article" date="1992" name="Proc. Natl. Acad. Sci. U.S.A.">
        <title>Yeast casein kinase I homologues: an essential gene pair.</title>
        <authorList>
            <person name="Robinson L.C."/>
            <person name="Hubbard E.J.A."/>
            <person name="Graves P.R."/>
            <person name="dePaoli-Roach A.A."/>
            <person name="Roach P.J."/>
            <person name="Kung C."/>
            <person name="Haas D.W."/>
            <person name="Hagedorn C.H."/>
            <person name="Goebl M."/>
            <person name="Culbertson M.R."/>
            <person name="Carlson M."/>
        </authorList>
    </citation>
    <scope>NUCLEOTIDE SEQUENCE [GENOMIC DNA]</scope>
    <source>
        <strain>ATCC 204508 / S288c</strain>
    </source>
</reference>
<reference key="2">
    <citation type="journal article" date="1992" name="Mol. Biol. Cell">
        <title>Two genes in Saccharomyces cerevisiae encode a membrane-bound form of casein kinase-1.</title>
        <authorList>
            <person name="Wang P.-C."/>
            <person name="Vancura A."/>
            <person name="Mitcheson T.G.M."/>
            <person name="Kuret J."/>
        </authorList>
    </citation>
    <scope>NUCLEOTIDE SEQUENCE [GENOMIC DNA]</scope>
</reference>
<reference key="3">
    <citation type="journal article" date="1994" name="Science">
        <title>Complete nucleotide sequence of Saccharomyces cerevisiae chromosome VIII.</title>
        <authorList>
            <person name="Johnston M."/>
            <person name="Andrews S."/>
            <person name="Brinkman R."/>
            <person name="Cooper J."/>
            <person name="Ding H."/>
            <person name="Dover J."/>
            <person name="Du Z."/>
            <person name="Favello A."/>
            <person name="Fulton L."/>
            <person name="Gattung S."/>
            <person name="Geisel C."/>
            <person name="Kirsten J."/>
            <person name="Kucaba T."/>
            <person name="Hillier L.W."/>
            <person name="Jier M."/>
            <person name="Johnston L."/>
            <person name="Langston Y."/>
            <person name="Latreille P."/>
            <person name="Louis E.J."/>
            <person name="Macri C."/>
            <person name="Mardis E."/>
            <person name="Menezes S."/>
            <person name="Mouser L."/>
            <person name="Nhan M."/>
            <person name="Rifkin L."/>
            <person name="Riles L."/>
            <person name="St Peter H."/>
            <person name="Trevaskis E."/>
            <person name="Vaughan K."/>
            <person name="Vignati D."/>
            <person name="Wilcox L."/>
            <person name="Wohldman P."/>
            <person name="Waterston R."/>
            <person name="Wilson R."/>
            <person name="Vaudin M."/>
        </authorList>
    </citation>
    <scope>NUCLEOTIDE SEQUENCE [LARGE SCALE GENOMIC DNA]</scope>
    <source>
        <strain>ATCC 204508 / S288c</strain>
    </source>
</reference>
<reference key="4">
    <citation type="journal article" date="2014" name="G3 (Bethesda)">
        <title>The reference genome sequence of Saccharomyces cerevisiae: Then and now.</title>
        <authorList>
            <person name="Engel S.R."/>
            <person name="Dietrich F.S."/>
            <person name="Fisk D.G."/>
            <person name="Binkley G."/>
            <person name="Balakrishnan R."/>
            <person name="Costanzo M.C."/>
            <person name="Dwight S.S."/>
            <person name="Hitz B.C."/>
            <person name="Karra K."/>
            <person name="Nash R.S."/>
            <person name="Weng S."/>
            <person name="Wong E.D."/>
            <person name="Lloyd P."/>
            <person name="Skrzypek M.S."/>
            <person name="Miyasato S.R."/>
            <person name="Simison M."/>
            <person name="Cherry J.M."/>
        </authorList>
    </citation>
    <scope>GENOME REANNOTATION</scope>
    <source>
        <strain>ATCC 204508 / S288c</strain>
    </source>
</reference>
<reference key="5">
    <citation type="journal article" date="2007" name="Genome Res.">
        <title>Approaching a complete repository of sequence-verified protein-encoding clones for Saccharomyces cerevisiae.</title>
        <authorList>
            <person name="Hu Y."/>
            <person name="Rolfs A."/>
            <person name="Bhullar B."/>
            <person name="Murthy T.V.S."/>
            <person name="Zhu C."/>
            <person name="Berger M.F."/>
            <person name="Camargo A.A."/>
            <person name="Kelley F."/>
            <person name="McCarron S."/>
            <person name="Jepson D."/>
            <person name="Richardson A."/>
            <person name="Raphael J."/>
            <person name="Moreira D."/>
            <person name="Taycher E."/>
            <person name="Zuo D."/>
            <person name="Mohr S."/>
            <person name="Kane M.F."/>
            <person name="Williamson J."/>
            <person name="Simpson A.J.G."/>
            <person name="Bulyk M.L."/>
            <person name="Harlow E."/>
            <person name="Marsischky G."/>
            <person name="Kolodner R.D."/>
            <person name="LaBaer J."/>
        </authorList>
    </citation>
    <scope>NUCLEOTIDE SEQUENCE [GENOMIC DNA]</scope>
    <source>
        <strain>ATCC 204508 / S288c</strain>
    </source>
</reference>
<reference key="6">
    <citation type="journal article" date="1998" name="Mol. Gen. Genet.">
        <title>Characterisation of Saccharomyces cerevisiae ARO8 and ARO9 genes encoding aromatic aminotransferases I and II reveals a new aminotransferase subfamily.</title>
        <authorList>
            <person name="Iraqui I."/>
            <person name="Vissers S."/>
            <person name="Cartiaux M."/>
            <person name="Urrestarazu A."/>
        </authorList>
    </citation>
    <scope>NUCLEOTIDE SEQUENCE [GENOMIC DNA] OF 1-38</scope>
    <source>
        <strain>Sigma 1278B</strain>
    </source>
</reference>
<reference key="7">
    <citation type="journal article" date="2000" name="Mol. Cell. Biol.">
        <title>Akr1p and the type I casein kinases act prior to the ubiquitination step of yeast endocytosis: Akr1p is required for kinase localization to the plasma membrane.</title>
        <authorList>
            <person name="Feng Y."/>
            <person name="Davis N.G."/>
        </authorList>
    </citation>
    <scope>FUNCTION</scope>
    <scope>SUBCELLULAR LOCATION</scope>
</reference>
<reference key="8">
    <citation type="journal article" date="2002" name="J. Cell Biol.">
        <title>The yeast DHHC cysteine-rich domain protein Akr1p is a palmitoyl transferase.</title>
        <authorList>
            <person name="Roth A.F."/>
            <person name="Feng Y."/>
            <person name="Chen L."/>
            <person name="Davis N.G."/>
        </authorList>
    </citation>
    <scope>PALMITOYLATION</scope>
</reference>
<reference key="9">
    <citation type="journal article" date="2003" name="Nature">
        <title>Global analysis of protein expression in yeast.</title>
        <authorList>
            <person name="Ghaemmaghami S."/>
            <person name="Huh W.-K."/>
            <person name="Bower K."/>
            <person name="Howson R.W."/>
            <person name="Belle A."/>
            <person name="Dephoure N."/>
            <person name="O'Shea E.K."/>
            <person name="Weissman J.S."/>
        </authorList>
    </citation>
    <scope>LEVEL OF PROTEIN EXPRESSION [LARGE SCALE ANALYSIS]</scope>
</reference>
<reference key="10">
    <citation type="journal article" date="2006" name="J. Proteome Res.">
        <title>Toward the complete yeast mitochondrial proteome: multidimensional separation techniques for mitochondrial proteomics.</title>
        <authorList>
            <person name="Reinders J."/>
            <person name="Zahedi R.P."/>
            <person name="Pfanner N."/>
            <person name="Meisinger C."/>
            <person name="Sickmann A."/>
        </authorList>
    </citation>
    <scope>SUBCELLULAR LOCATION [LARGE SCALE ANALYSIS]</scope>
    <scope>IDENTIFICATION BY MASS SPECTROMETRY</scope>
</reference>
<reference key="11">
    <citation type="journal article" date="2007" name="J. Proteome Res.">
        <title>Large-scale phosphorylation analysis of alpha-factor-arrested Saccharomyces cerevisiae.</title>
        <authorList>
            <person name="Li X."/>
            <person name="Gerber S.A."/>
            <person name="Rudner A.D."/>
            <person name="Beausoleil S.A."/>
            <person name="Haas W."/>
            <person name="Villen J."/>
            <person name="Elias J.E."/>
            <person name="Gygi S.P."/>
        </authorList>
    </citation>
    <scope>PHOSPHORYLATION [LARGE SCALE ANALYSIS] AT SER-522; SER-523 AND SER-527</scope>
    <scope>IDENTIFICATION BY MASS SPECTROMETRY [LARGE SCALE ANALYSIS]</scope>
    <source>
        <strain>ADR376</strain>
    </source>
</reference>
<reference key="12">
    <citation type="journal article" date="2008" name="Mol. Cell. Proteomics">
        <title>A multidimensional chromatography technology for in-depth phosphoproteome analysis.</title>
        <authorList>
            <person name="Albuquerque C.P."/>
            <person name="Smolka M.B."/>
            <person name="Payne S.H."/>
            <person name="Bafna V."/>
            <person name="Eng J."/>
            <person name="Zhou H."/>
        </authorList>
    </citation>
    <scope>IDENTIFICATION BY MASS SPECTROMETRY [LARGE SCALE ANALYSIS]</scope>
</reference>
<reference key="13">
    <citation type="journal article" date="2009" name="Science">
        <title>Global analysis of Cdk1 substrate phosphorylation sites provides insights into evolution.</title>
        <authorList>
            <person name="Holt L.J."/>
            <person name="Tuch B.B."/>
            <person name="Villen J."/>
            <person name="Johnson A.D."/>
            <person name="Gygi S.P."/>
            <person name="Morgan D.O."/>
        </authorList>
    </citation>
    <scope>PHOSPHORYLATION [LARGE SCALE ANALYSIS] AT SER-522; SER-523 AND SER-527</scope>
    <scope>IDENTIFICATION BY MASS SPECTROMETRY [LARGE SCALE ANALYSIS]</scope>
</reference>
<comment type="function">
    <text evidence="5">Casein kinases are operationally defined by their preferential utilization of acidic proteins such as caseins as substrates.</text>
</comment>
<comment type="catalytic activity">
    <reaction>
        <text>L-seryl-[protein] + ATP = O-phospho-L-seryl-[protein] + ADP + H(+)</text>
        <dbReference type="Rhea" id="RHEA:17989"/>
        <dbReference type="Rhea" id="RHEA-COMP:9863"/>
        <dbReference type="Rhea" id="RHEA-COMP:11604"/>
        <dbReference type="ChEBI" id="CHEBI:15378"/>
        <dbReference type="ChEBI" id="CHEBI:29999"/>
        <dbReference type="ChEBI" id="CHEBI:30616"/>
        <dbReference type="ChEBI" id="CHEBI:83421"/>
        <dbReference type="ChEBI" id="CHEBI:456216"/>
        <dbReference type="EC" id="2.7.11.1"/>
    </reaction>
</comment>
<comment type="catalytic activity">
    <reaction>
        <text>L-threonyl-[protein] + ATP = O-phospho-L-threonyl-[protein] + ADP + H(+)</text>
        <dbReference type="Rhea" id="RHEA:46608"/>
        <dbReference type="Rhea" id="RHEA-COMP:11060"/>
        <dbReference type="Rhea" id="RHEA-COMP:11605"/>
        <dbReference type="ChEBI" id="CHEBI:15378"/>
        <dbReference type="ChEBI" id="CHEBI:30013"/>
        <dbReference type="ChEBI" id="CHEBI:30616"/>
        <dbReference type="ChEBI" id="CHEBI:61977"/>
        <dbReference type="ChEBI" id="CHEBI:456216"/>
        <dbReference type="EC" id="2.7.11.1"/>
    </reaction>
</comment>
<comment type="interaction">
    <interactant intactId="EBI-4718">
        <id>P23291</id>
    </interactant>
    <interactant intactId="EBI-17635">
        <id>P00445</id>
        <label>SOD1</label>
    </interactant>
    <organismsDiffer>false</organismsDiffer>
    <experiments>2</experiments>
</comment>
<comment type="interaction">
    <interactant intactId="EBI-4718">
        <id>P23291</id>
    </interactant>
    <interactant intactId="EBI-19909">
        <id>P19812</id>
        <label>UBR1</label>
    </interactant>
    <organismsDiffer>false</organismsDiffer>
    <experiments>2</experiments>
</comment>
<comment type="interaction">
    <interactant intactId="EBI-4718">
        <id>P23291</id>
    </interactant>
    <interactant intactId="EBI-4729">
        <id>P23292</id>
        <label>YCK2</label>
    </interactant>
    <organismsDiffer>false</organismsDiffer>
    <experiments>4</experiments>
</comment>
<comment type="subcellular location">
    <subcellularLocation>
        <location evidence="5">Cell membrane</location>
        <topology evidence="5">Lipid-anchor</topology>
    </subcellularLocation>
    <subcellularLocation>
        <location evidence="8">Mitochondrion membrane</location>
    </subcellularLocation>
</comment>
<comment type="PTM">
    <text evidence="6">Palmitoylated by AKR1.</text>
</comment>
<comment type="miscellaneous">
    <text evidence="7">Present with 1630 molecules/cell in log phase SD medium.</text>
</comment>
<comment type="similarity">
    <text evidence="9">Belongs to the protein kinase superfamily. CK1 Ser/Thr protein kinase family. Casein kinase I subfamily.</text>
</comment>
<keyword id="KW-0002">3D-structure</keyword>
<keyword id="KW-0067">ATP-binding</keyword>
<keyword id="KW-1003">Cell membrane</keyword>
<keyword id="KW-0418">Kinase</keyword>
<keyword id="KW-0449">Lipoprotein</keyword>
<keyword id="KW-0472">Membrane</keyword>
<keyword id="KW-0496">Mitochondrion</keyword>
<keyword id="KW-0547">Nucleotide-binding</keyword>
<keyword id="KW-0564">Palmitate</keyword>
<keyword id="KW-0597">Phosphoprotein</keyword>
<keyword id="KW-1185">Reference proteome</keyword>
<keyword id="KW-0723">Serine/threonine-protein kinase</keyword>
<keyword id="KW-0808">Transferase</keyword>
<dbReference type="EC" id="2.7.11.1"/>
<dbReference type="EMBL" id="M74552">
    <property type="protein sequence ID" value="AAA35229.1"/>
    <property type="molecule type" value="Genomic_DNA"/>
</dbReference>
<dbReference type="EMBL" id="X60327">
    <property type="protein sequence ID" value="CAA42897.1"/>
    <property type="molecule type" value="Genomic_DNA"/>
</dbReference>
<dbReference type="EMBL" id="U10398">
    <property type="protein sequence ID" value="AAB68417.1"/>
    <property type="molecule type" value="Genomic_DNA"/>
</dbReference>
<dbReference type="EMBL" id="Y13625">
    <property type="protein sequence ID" value="CAA73948.1"/>
    <property type="molecule type" value="Genomic_DNA"/>
</dbReference>
<dbReference type="EMBL" id="BK006934">
    <property type="protein sequence ID" value="DAA06828.1"/>
    <property type="molecule type" value="Genomic_DNA"/>
</dbReference>
<dbReference type="EMBL" id="AY723826">
    <property type="protein sequence ID" value="AAU09743.1"/>
    <property type="molecule type" value="Genomic_DNA"/>
</dbReference>
<dbReference type="PIR" id="S29521">
    <property type="entry name" value="S29521"/>
</dbReference>
<dbReference type="RefSeq" id="NP_012003.1">
    <property type="nucleotide sequence ID" value="NM_001179265.1"/>
</dbReference>
<dbReference type="PDB" id="5X18">
    <property type="method" value="X-ray"/>
    <property type="resolution" value="1.80 A"/>
    <property type="chains" value="A/B=62-355"/>
</dbReference>
<dbReference type="PDBsum" id="5X18"/>
<dbReference type="SMR" id="P23291"/>
<dbReference type="BioGRID" id="36568">
    <property type="interactions" value="513"/>
</dbReference>
<dbReference type="DIP" id="DIP-719N"/>
<dbReference type="FunCoup" id="P23291">
    <property type="interactions" value="919"/>
</dbReference>
<dbReference type="IntAct" id="P23291">
    <property type="interactions" value="97"/>
</dbReference>
<dbReference type="MINT" id="P23291"/>
<dbReference type="STRING" id="4932.YHR135C"/>
<dbReference type="ChEMBL" id="CHEMBL3497"/>
<dbReference type="GlyGen" id="P23291">
    <property type="glycosylation" value="4 sites, 1 O-linked glycan (4 sites)"/>
</dbReference>
<dbReference type="iPTMnet" id="P23291"/>
<dbReference type="SwissPalm" id="P23291"/>
<dbReference type="PaxDb" id="4932-YHR135C"/>
<dbReference type="PeptideAtlas" id="P23291"/>
<dbReference type="EnsemblFungi" id="YHR135C_mRNA">
    <property type="protein sequence ID" value="YHR135C"/>
    <property type="gene ID" value="YHR135C"/>
</dbReference>
<dbReference type="GeneID" id="856537"/>
<dbReference type="KEGG" id="sce:YHR135C"/>
<dbReference type="AGR" id="SGD:S000001177"/>
<dbReference type="SGD" id="S000001177">
    <property type="gene designation" value="YCK1"/>
</dbReference>
<dbReference type="VEuPathDB" id="FungiDB:YHR135C"/>
<dbReference type="eggNOG" id="KOG1165">
    <property type="taxonomic scope" value="Eukaryota"/>
</dbReference>
<dbReference type="GeneTree" id="ENSGT00940000176388"/>
<dbReference type="HOGENOM" id="CLU_019279_1_0_1"/>
<dbReference type="InParanoid" id="P23291"/>
<dbReference type="OMA" id="NIPYAYY"/>
<dbReference type="OrthoDB" id="5800476at2759"/>
<dbReference type="BioCyc" id="YEAST:YHR135C-MONOMER"/>
<dbReference type="BRENDA" id="2.7.11.1">
    <property type="organism ID" value="984"/>
</dbReference>
<dbReference type="BioGRID-ORCS" id="856537">
    <property type="hits" value="6 hits in 13 CRISPR screens"/>
</dbReference>
<dbReference type="PRO" id="PR:P23291"/>
<dbReference type="Proteomes" id="UP000002311">
    <property type="component" value="Chromosome VIII"/>
</dbReference>
<dbReference type="RNAct" id="P23291">
    <property type="molecule type" value="protein"/>
</dbReference>
<dbReference type="GO" id="GO:0071944">
    <property type="term" value="C:cell periphery"/>
    <property type="evidence" value="ECO:0007005"/>
    <property type="project" value="SGD"/>
</dbReference>
<dbReference type="GO" id="GO:0005737">
    <property type="term" value="C:cytoplasm"/>
    <property type="evidence" value="ECO:0000318"/>
    <property type="project" value="GO_Central"/>
</dbReference>
<dbReference type="GO" id="GO:0005783">
    <property type="term" value="C:endoplasmic reticulum"/>
    <property type="evidence" value="ECO:0007005"/>
    <property type="project" value="SGD"/>
</dbReference>
<dbReference type="GO" id="GO:0031966">
    <property type="term" value="C:mitochondrial membrane"/>
    <property type="evidence" value="ECO:0007669"/>
    <property type="project" value="UniProtKB-SubCell"/>
</dbReference>
<dbReference type="GO" id="GO:0005739">
    <property type="term" value="C:mitochondrion"/>
    <property type="evidence" value="ECO:0007005"/>
    <property type="project" value="SGD"/>
</dbReference>
<dbReference type="GO" id="GO:0005634">
    <property type="term" value="C:nucleus"/>
    <property type="evidence" value="ECO:0000318"/>
    <property type="project" value="GO_Central"/>
</dbReference>
<dbReference type="GO" id="GO:0005886">
    <property type="term" value="C:plasma membrane"/>
    <property type="evidence" value="ECO:0000314"/>
    <property type="project" value="SGD"/>
</dbReference>
<dbReference type="GO" id="GO:0005524">
    <property type="term" value="F:ATP binding"/>
    <property type="evidence" value="ECO:0007669"/>
    <property type="project" value="UniProtKB-KW"/>
</dbReference>
<dbReference type="GO" id="GO:0004672">
    <property type="term" value="F:protein kinase activity"/>
    <property type="evidence" value="ECO:0007005"/>
    <property type="project" value="SGD"/>
</dbReference>
<dbReference type="GO" id="GO:0106310">
    <property type="term" value="F:protein serine kinase activity"/>
    <property type="evidence" value="ECO:0007669"/>
    <property type="project" value="RHEA"/>
</dbReference>
<dbReference type="GO" id="GO:0004674">
    <property type="term" value="F:protein serine/threonine kinase activity"/>
    <property type="evidence" value="ECO:0000314"/>
    <property type="project" value="SGD"/>
</dbReference>
<dbReference type="GO" id="GO:0000902">
    <property type="term" value="P:cell morphogenesis"/>
    <property type="evidence" value="ECO:0000315"/>
    <property type="project" value="SGD"/>
</dbReference>
<dbReference type="GO" id="GO:0006897">
    <property type="term" value="P:endocytosis"/>
    <property type="evidence" value="ECO:0000315"/>
    <property type="project" value="SGD"/>
</dbReference>
<dbReference type="GO" id="GO:0010255">
    <property type="term" value="P:glucose mediated signaling pathway"/>
    <property type="evidence" value="ECO:0000316"/>
    <property type="project" value="SGD"/>
</dbReference>
<dbReference type="GO" id="GO:0009749">
    <property type="term" value="P:response to glucose"/>
    <property type="evidence" value="ECO:0000315"/>
    <property type="project" value="SGD"/>
</dbReference>
<dbReference type="GO" id="GO:0007165">
    <property type="term" value="P:signal transduction"/>
    <property type="evidence" value="ECO:0000318"/>
    <property type="project" value="GO_Central"/>
</dbReference>
<dbReference type="CDD" id="cd14127">
    <property type="entry name" value="STKc_CK1_fungal"/>
    <property type="match status" value="1"/>
</dbReference>
<dbReference type="FunFam" id="3.30.200.20:FF:000538">
    <property type="entry name" value="Putative Casein kinase I"/>
    <property type="match status" value="1"/>
</dbReference>
<dbReference type="Gene3D" id="1.10.510.10">
    <property type="entry name" value="Transferase(Phosphotransferase) domain 1"/>
    <property type="match status" value="1"/>
</dbReference>
<dbReference type="InterPro" id="IPR050235">
    <property type="entry name" value="CK1_Ser-Thr_kinase"/>
</dbReference>
<dbReference type="InterPro" id="IPR011009">
    <property type="entry name" value="Kinase-like_dom_sf"/>
</dbReference>
<dbReference type="InterPro" id="IPR000719">
    <property type="entry name" value="Prot_kinase_dom"/>
</dbReference>
<dbReference type="InterPro" id="IPR017441">
    <property type="entry name" value="Protein_kinase_ATP_BS"/>
</dbReference>
<dbReference type="InterPro" id="IPR008271">
    <property type="entry name" value="Ser/Thr_kinase_AS"/>
</dbReference>
<dbReference type="PANTHER" id="PTHR11909">
    <property type="entry name" value="CASEIN KINASE-RELATED"/>
    <property type="match status" value="1"/>
</dbReference>
<dbReference type="Pfam" id="PF00069">
    <property type="entry name" value="Pkinase"/>
    <property type="match status" value="1"/>
</dbReference>
<dbReference type="SMART" id="SM00220">
    <property type="entry name" value="S_TKc"/>
    <property type="match status" value="1"/>
</dbReference>
<dbReference type="SUPFAM" id="SSF56112">
    <property type="entry name" value="Protein kinase-like (PK-like)"/>
    <property type="match status" value="1"/>
</dbReference>
<dbReference type="PROSITE" id="PS00107">
    <property type="entry name" value="PROTEIN_KINASE_ATP"/>
    <property type="match status" value="1"/>
</dbReference>
<dbReference type="PROSITE" id="PS50011">
    <property type="entry name" value="PROTEIN_KINASE_DOM"/>
    <property type="match status" value="1"/>
</dbReference>
<dbReference type="PROSITE" id="PS00108">
    <property type="entry name" value="PROTEIN_KINASE_ST"/>
    <property type="match status" value="1"/>
</dbReference>
<organism>
    <name type="scientific">Saccharomyces cerevisiae (strain ATCC 204508 / S288c)</name>
    <name type="common">Baker's yeast</name>
    <dbReference type="NCBI Taxonomy" id="559292"/>
    <lineage>
        <taxon>Eukaryota</taxon>
        <taxon>Fungi</taxon>
        <taxon>Dikarya</taxon>
        <taxon>Ascomycota</taxon>
        <taxon>Saccharomycotina</taxon>
        <taxon>Saccharomycetes</taxon>
        <taxon>Saccharomycetales</taxon>
        <taxon>Saccharomycetaceae</taxon>
        <taxon>Saccharomyces</taxon>
    </lineage>
</organism>
<evidence type="ECO:0000250" key="1"/>
<evidence type="ECO:0000255" key="2">
    <source>
        <dbReference type="PROSITE-ProRule" id="PRU00159"/>
    </source>
</evidence>
<evidence type="ECO:0000255" key="3">
    <source>
        <dbReference type="PROSITE-ProRule" id="PRU10027"/>
    </source>
</evidence>
<evidence type="ECO:0000256" key="4">
    <source>
        <dbReference type="SAM" id="MobiDB-lite"/>
    </source>
</evidence>
<evidence type="ECO:0000269" key="5">
    <source>
    </source>
</evidence>
<evidence type="ECO:0000269" key="6">
    <source>
    </source>
</evidence>
<evidence type="ECO:0000269" key="7">
    <source>
    </source>
</evidence>
<evidence type="ECO:0000269" key="8">
    <source>
    </source>
</evidence>
<evidence type="ECO:0000305" key="9"/>
<evidence type="ECO:0007744" key="10">
    <source>
    </source>
</evidence>
<evidence type="ECO:0007744" key="11">
    <source>
    </source>
</evidence>
<evidence type="ECO:0007829" key="12">
    <source>
        <dbReference type="PDB" id="5X18"/>
    </source>
</evidence>
<feature type="chain" id="PRO_0000192856" description="Casein kinase I homolog 1">
    <location>
        <begin position="1"/>
        <end position="538"/>
    </location>
</feature>
<feature type="domain" description="Protein kinase" evidence="2">
    <location>
        <begin position="69"/>
        <end position="353"/>
    </location>
</feature>
<feature type="region of interest" description="Disordered" evidence="4">
    <location>
        <begin position="39"/>
        <end position="61"/>
    </location>
</feature>
<feature type="region of interest" description="Disordered" evidence="4">
    <location>
        <begin position="366"/>
        <end position="428"/>
    </location>
</feature>
<feature type="region of interest" description="Disordered" evidence="4">
    <location>
        <begin position="474"/>
        <end position="527"/>
    </location>
</feature>
<feature type="compositionally biased region" description="Low complexity" evidence="4">
    <location>
        <begin position="41"/>
        <end position="57"/>
    </location>
</feature>
<feature type="compositionally biased region" description="Low complexity" evidence="4">
    <location>
        <begin position="391"/>
        <end position="410"/>
    </location>
</feature>
<feature type="compositionally biased region" description="Low complexity" evidence="4">
    <location>
        <begin position="474"/>
        <end position="498"/>
    </location>
</feature>
<feature type="active site" description="Proton acceptor" evidence="2 3">
    <location>
        <position position="188"/>
    </location>
</feature>
<feature type="binding site" evidence="2">
    <location>
        <begin position="75"/>
        <end position="83"/>
    </location>
    <ligand>
        <name>ATP</name>
        <dbReference type="ChEBI" id="CHEBI:30616"/>
    </ligand>
</feature>
<feature type="binding site" evidence="2">
    <location>
        <position position="98"/>
    </location>
    <ligand>
        <name>ATP</name>
        <dbReference type="ChEBI" id="CHEBI:30616"/>
    </ligand>
</feature>
<feature type="modified residue" description="Phosphoserine" evidence="10 11">
    <location>
        <position position="522"/>
    </location>
</feature>
<feature type="modified residue" description="Phosphoserine" evidence="10 11">
    <location>
        <position position="523"/>
    </location>
</feature>
<feature type="modified residue" description="Phosphoserine" evidence="10 11">
    <location>
        <position position="527"/>
    </location>
</feature>
<feature type="lipid moiety-binding region" description="S-palmitoyl cysteine" evidence="1">
    <location>
        <position position="537"/>
    </location>
</feature>
<feature type="lipid moiety-binding region" description="S-palmitoyl cysteine" evidence="1">
    <location>
        <position position="538"/>
    </location>
</feature>
<feature type="sequence conflict" description="In Ref. 5; AAU09743." evidence="9" ref="5">
    <original>Q</original>
    <variation>H</variation>
    <location>
        <position position="201"/>
    </location>
</feature>
<feature type="sequence conflict" description="In Ref. 2; CAA42897." evidence="9" ref="2">
    <original>K</original>
    <variation>E</variation>
    <location>
        <position position="367"/>
    </location>
</feature>
<feature type="turn" evidence="12">
    <location>
        <begin position="66"/>
        <end position="68"/>
    </location>
</feature>
<feature type="strand" evidence="12">
    <location>
        <begin position="69"/>
        <end position="78"/>
    </location>
</feature>
<feature type="strand" evidence="12">
    <location>
        <begin position="81"/>
        <end position="88"/>
    </location>
</feature>
<feature type="turn" evidence="12">
    <location>
        <begin position="89"/>
        <end position="91"/>
    </location>
</feature>
<feature type="strand" evidence="12">
    <location>
        <begin position="94"/>
        <end position="103"/>
    </location>
</feature>
<feature type="helix" evidence="12">
    <location>
        <begin position="109"/>
        <end position="119"/>
    </location>
</feature>
<feature type="strand" evidence="12">
    <location>
        <begin position="128"/>
        <end position="134"/>
    </location>
</feature>
<feature type="strand" evidence="12">
    <location>
        <begin position="137"/>
        <end position="143"/>
    </location>
</feature>
<feature type="helix" evidence="12">
    <location>
        <begin position="149"/>
        <end position="155"/>
    </location>
</feature>
<feature type="helix" evidence="12">
    <location>
        <begin position="162"/>
        <end position="181"/>
    </location>
</feature>
<feature type="helix" evidence="12">
    <location>
        <begin position="191"/>
        <end position="193"/>
    </location>
</feature>
<feature type="turn" evidence="12">
    <location>
        <begin position="202"/>
        <end position="205"/>
    </location>
</feature>
<feature type="strand" evidence="12">
    <location>
        <begin position="216"/>
        <end position="219"/>
    </location>
</feature>
<feature type="turn" evidence="12">
    <location>
        <begin position="221"/>
        <end position="223"/>
    </location>
</feature>
<feature type="turn" evidence="12">
    <location>
        <begin position="239"/>
        <end position="241"/>
    </location>
</feature>
<feature type="helix" evidence="12">
    <location>
        <begin position="244"/>
        <end position="247"/>
    </location>
</feature>
<feature type="helix" evidence="12">
    <location>
        <begin position="254"/>
        <end position="270"/>
    </location>
</feature>
<feature type="helix" evidence="12">
    <location>
        <begin position="283"/>
        <end position="296"/>
    </location>
</feature>
<feature type="helix" evidence="12">
    <location>
        <begin position="299"/>
        <end position="302"/>
    </location>
</feature>
<feature type="turn" evidence="12">
    <location>
        <begin position="303"/>
        <end position="305"/>
    </location>
</feature>
<feature type="helix" evidence="12">
    <location>
        <begin position="308"/>
        <end position="318"/>
    </location>
</feature>
<feature type="helix" evidence="12">
    <location>
        <begin position="328"/>
        <end position="342"/>
    </location>
</feature>
<feature type="helix" evidence="12">
    <location>
        <begin position="351"/>
        <end position="354"/>
    </location>
</feature>
<name>KC11_YEAST</name>